<geneLocation type="plastid"/>
<accession>A7M999</accession>
<organism>
    <name type="scientific">Cuscuta reflexa</name>
    <name type="common">Southern Asian dodder</name>
    <dbReference type="NCBI Taxonomy" id="4129"/>
    <lineage>
        <taxon>Eukaryota</taxon>
        <taxon>Viridiplantae</taxon>
        <taxon>Streptophyta</taxon>
        <taxon>Embryophyta</taxon>
        <taxon>Tracheophyta</taxon>
        <taxon>Spermatophyta</taxon>
        <taxon>Magnoliopsida</taxon>
        <taxon>eudicotyledons</taxon>
        <taxon>Gunneridae</taxon>
        <taxon>Pentapetalae</taxon>
        <taxon>asterids</taxon>
        <taxon>lamiids</taxon>
        <taxon>Solanales</taxon>
        <taxon>Convolvulaceae</taxon>
        <taxon>Cuscuteae</taxon>
        <taxon>Cuscuta</taxon>
        <taxon>Cuscuta subgen. Monogynella</taxon>
    </lineage>
</organism>
<gene>
    <name evidence="1" type="primary">rpl14</name>
</gene>
<protein>
    <recommendedName>
        <fullName evidence="1">Large ribosomal subunit protein uL14c</fullName>
    </recommendedName>
    <alternativeName>
        <fullName evidence="2">50S ribosomal protein L14, plastid</fullName>
    </alternativeName>
</protein>
<proteinExistence type="inferred from homology"/>
<evidence type="ECO:0000255" key="1">
    <source>
        <dbReference type="HAMAP-Rule" id="MF_01367"/>
    </source>
</evidence>
<evidence type="ECO:0000305" key="2"/>
<comment type="function">
    <text evidence="1">Binds to 23S rRNA.</text>
</comment>
<comment type="subunit">
    <text evidence="1">Part of the 50S ribosomal subunit.</text>
</comment>
<comment type="subcellular location">
    <subcellularLocation>
        <location>Plastid</location>
    </subcellularLocation>
</comment>
<comment type="similarity">
    <text evidence="1">Belongs to the universal ribosomal protein uL14 family.</text>
</comment>
<comment type="caution">
    <text evidence="2">Young tissue from this organism is photosynthetic and contains some thylakoids, although the photosynthetic activity does not exceed the light compensation point.</text>
</comment>
<sequence>MIQPQTHLNVADNSGARELMCIQIIGASNRRYAHIGDIIVAVIKEAVPNMPLERSEVVRAVIVRTRKELKRDNGMIIRYDDNAAVVIDQEGNPKGTRIFGAIPRELRQFNFTKIVSLAPEVL</sequence>
<feature type="chain" id="PRO_0000355875" description="Large ribosomal subunit protein uL14c">
    <location>
        <begin position="1"/>
        <end position="122"/>
    </location>
</feature>
<name>RK14_CUSRE</name>
<reference key="1">
    <citation type="journal article" date="2007" name="BMC Plant Biol.">
        <title>Complete DNA sequences of the plastid genomes of two parasitic flowering plant species, Cuscuta reflexa and Cuscuta gronovii.</title>
        <authorList>
            <person name="Funk H.T."/>
            <person name="Berg S."/>
            <person name="Krupinska K."/>
            <person name="Maier U.-G."/>
            <person name="Krause K."/>
        </authorList>
    </citation>
    <scope>NUCLEOTIDE SEQUENCE [LARGE SCALE GENOMIC DNA]</scope>
</reference>
<keyword id="KW-0934">Plastid</keyword>
<keyword id="KW-0687">Ribonucleoprotein</keyword>
<keyword id="KW-0689">Ribosomal protein</keyword>
<keyword id="KW-0694">RNA-binding</keyword>
<keyword id="KW-0699">rRNA-binding</keyword>
<dbReference type="EMBL" id="AM711640">
    <property type="protein sequence ID" value="CAM98427.1"/>
    <property type="molecule type" value="Genomic_DNA"/>
</dbReference>
<dbReference type="RefSeq" id="YP_001430140.1">
    <property type="nucleotide sequence ID" value="NC_009766.1"/>
</dbReference>
<dbReference type="SMR" id="A7M999"/>
<dbReference type="GeneID" id="5536629"/>
<dbReference type="GO" id="GO:0022625">
    <property type="term" value="C:cytosolic large ribosomal subunit"/>
    <property type="evidence" value="ECO:0007669"/>
    <property type="project" value="TreeGrafter"/>
</dbReference>
<dbReference type="GO" id="GO:0009536">
    <property type="term" value="C:plastid"/>
    <property type="evidence" value="ECO:0007669"/>
    <property type="project" value="UniProtKB-SubCell"/>
</dbReference>
<dbReference type="GO" id="GO:0070180">
    <property type="term" value="F:large ribosomal subunit rRNA binding"/>
    <property type="evidence" value="ECO:0007669"/>
    <property type="project" value="TreeGrafter"/>
</dbReference>
<dbReference type="GO" id="GO:0003735">
    <property type="term" value="F:structural constituent of ribosome"/>
    <property type="evidence" value="ECO:0007669"/>
    <property type="project" value="InterPro"/>
</dbReference>
<dbReference type="GO" id="GO:0006412">
    <property type="term" value="P:translation"/>
    <property type="evidence" value="ECO:0007669"/>
    <property type="project" value="InterPro"/>
</dbReference>
<dbReference type="CDD" id="cd00337">
    <property type="entry name" value="Ribosomal_uL14"/>
    <property type="match status" value="1"/>
</dbReference>
<dbReference type="FunFam" id="2.40.150.20:FF:000002">
    <property type="entry name" value="50S ribosomal protein L14, chloroplastic"/>
    <property type="match status" value="1"/>
</dbReference>
<dbReference type="Gene3D" id="2.40.150.20">
    <property type="entry name" value="Ribosomal protein L14"/>
    <property type="match status" value="1"/>
</dbReference>
<dbReference type="HAMAP" id="MF_01367">
    <property type="entry name" value="Ribosomal_uL14"/>
    <property type="match status" value="1"/>
</dbReference>
<dbReference type="InterPro" id="IPR000218">
    <property type="entry name" value="Ribosomal_uL14"/>
</dbReference>
<dbReference type="InterPro" id="IPR005745">
    <property type="entry name" value="Ribosomal_uL14_bac-type"/>
</dbReference>
<dbReference type="InterPro" id="IPR019972">
    <property type="entry name" value="Ribosomal_uL14_CS"/>
</dbReference>
<dbReference type="InterPro" id="IPR036853">
    <property type="entry name" value="Ribosomal_uL14_sf"/>
</dbReference>
<dbReference type="NCBIfam" id="TIGR01067">
    <property type="entry name" value="rplN_bact"/>
    <property type="match status" value="1"/>
</dbReference>
<dbReference type="PANTHER" id="PTHR11761">
    <property type="entry name" value="50S/60S RIBOSOMAL PROTEIN L14/L23"/>
    <property type="match status" value="1"/>
</dbReference>
<dbReference type="PANTHER" id="PTHR11761:SF3">
    <property type="entry name" value="LARGE RIBOSOMAL SUBUNIT PROTEIN UL14M"/>
    <property type="match status" value="1"/>
</dbReference>
<dbReference type="Pfam" id="PF00238">
    <property type="entry name" value="Ribosomal_L14"/>
    <property type="match status" value="1"/>
</dbReference>
<dbReference type="SMART" id="SM01374">
    <property type="entry name" value="Ribosomal_L14"/>
    <property type="match status" value="1"/>
</dbReference>
<dbReference type="SUPFAM" id="SSF50193">
    <property type="entry name" value="Ribosomal protein L14"/>
    <property type="match status" value="1"/>
</dbReference>
<dbReference type="PROSITE" id="PS00049">
    <property type="entry name" value="RIBOSOMAL_L14"/>
    <property type="match status" value="1"/>
</dbReference>